<protein>
    <recommendedName>
        <fullName evidence="5">G1/S-specific cyclin-D3</fullName>
    </recommendedName>
</protein>
<accession>P48961</accession>
<accession>Q63628</accession>
<reference key="1">
    <citation type="journal article" date="1994" name="Gene">
        <title>Induction of D2 and D3 cyclin-encoding genes during promotion of the G1/S transition by prolactin in rat Nb2 cells.</title>
        <authorList>
            <person name="Hosokawa Y."/>
            <person name="Onga T."/>
            <person name="Nakashima K."/>
        </authorList>
    </citation>
    <scope>NUCLEOTIDE SEQUENCE [MRNA]</scope>
</reference>
<reference key="2">
    <citation type="journal article" date="1996" name="Gene">
        <title>Structure and characterization of rat cyclin D3 promoter.</title>
        <authorList>
            <person name="Yang M."/>
            <person name="Hosokawa Y."/>
            <person name="Kaneko S."/>
            <person name="Tanaka M."/>
            <person name="Nakashima K."/>
        </authorList>
    </citation>
    <scope>NUCLEOTIDE SEQUENCE [GENOMIC DNA] OF 1-66</scope>
    <source>
        <strain>Sprague-Dawley</strain>
        <tissue>Liver</tissue>
    </source>
</reference>
<reference key="3">
    <citation type="journal article" date="2012" name="Nat. Commun.">
        <title>Quantitative maps of protein phosphorylation sites across 14 different rat organs and tissues.</title>
        <authorList>
            <person name="Lundby A."/>
            <person name="Secher A."/>
            <person name="Lage K."/>
            <person name="Nordsborg N.B."/>
            <person name="Dmytriyev A."/>
            <person name="Lundby C."/>
            <person name="Olsen J.V."/>
        </authorList>
    </citation>
    <scope>PHOSPHORYLATION [LARGE SCALE ANALYSIS] AT SER-265</scope>
    <scope>IDENTIFICATION BY MASS SPECTROMETRY [LARGE SCALE ANALYSIS]</scope>
</reference>
<evidence type="ECO:0000250" key="1">
    <source>
        <dbReference type="UniProtKB" id="P24385"/>
    </source>
</evidence>
<evidence type="ECO:0000250" key="2">
    <source>
        <dbReference type="UniProtKB" id="P30281"/>
    </source>
</evidence>
<evidence type="ECO:0000250" key="3">
    <source>
        <dbReference type="UniProtKB" id="P30282"/>
    </source>
</evidence>
<evidence type="ECO:0000256" key="4">
    <source>
        <dbReference type="SAM" id="MobiDB-lite"/>
    </source>
</evidence>
<evidence type="ECO:0000303" key="5">
    <source>
    </source>
</evidence>
<evidence type="ECO:0000305" key="6"/>
<evidence type="ECO:0000312" key="7">
    <source>
        <dbReference type="RGD" id="2293"/>
    </source>
</evidence>
<evidence type="ECO:0007744" key="8">
    <source>
    </source>
</evidence>
<feature type="chain" id="PRO_0000080444" description="G1/S-specific cyclin-D3">
    <location>
        <begin position="1"/>
        <end position="293"/>
    </location>
</feature>
<feature type="domain" description="Cyclin N-terminal">
    <location>
        <begin position="27"/>
        <end position="152"/>
    </location>
</feature>
<feature type="region of interest" description="Disordered" evidence="4">
    <location>
        <begin position="257"/>
        <end position="293"/>
    </location>
</feature>
<feature type="compositionally biased region" description="Low complexity" evidence="4">
    <location>
        <begin position="271"/>
        <end position="286"/>
    </location>
</feature>
<feature type="modified residue" description="Phosphoserine" evidence="8">
    <location>
        <position position="265"/>
    </location>
</feature>
<feature type="modified residue" description="Phosphoserine" evidence="2">
    <location>
        <position position="280"/>
    </location>
</feature>
<feature type="modified residue" description="Phosphothreonine" evidence="1">
    <location>
        <position position="284"/>
    </location>
</feature>
<feature type="sequence conflict" description="In Ref. 2; AAB40713." evidence="6" ref="2">
    <original>L</original>
    <variation>H</variation>
    <location>
        <position position="11"/>
    </location>
</feature>
<keyword id="KW-0131">Cell cycle</keyword>
<keyword id="KW-0132">Cell division</keyword>
<keyword id="KW-0195">Cyclin</keyword>
<keyword id="KW-0963">Cytoplasm</keyword>
<keyword id="KW-0539">Nucleus</keyword>
<keyword id="KW-0597">Phosphoprotein</keyword>
<keyword id="KW-1185">Reference proteome</keyword>
<keyword id="KW-0804">Transcription</keyword>
<keyword id="KW-0805">Transcription regulation</keyword>
<keyword id="KW-0832">Ubl conjugation</keyword>
<proteinExistence type="evidence at protein level"/>
<organism>
    <name type="scientific">Rattus norvegicus</name>
    <name type="common">Rat</name>
    <dbReference type="NCBI Taxonomy" id="10116"/>
    <lineage>
        <taxon>Eukaryota</taxon>
        <taxon>Metazoa</taxon>
        <taxon>Chordata</taxon>
        <taxon>Craniata</taxon>
        <taxon>Vertebrata</taxon>
        <taxon>Euteleostomi</taxon>
        <taxon>Mammalia</taxon>
        <taxon>Eutheria</taxon>
        <taxon>Euarchontoglires</taxon>
        <taxon>Glires</taxon>
        <taxon>Rodentia</taxon>
        <taxon>Myomorpha</taxon>
        <taxon>Muroidea</taxon>
        <taxon>Muridae</taxon>
        <taxon>Murinae</taxon>
        <taxon>Rattus</taxon>
    </lineage>
</organism>
<comment type="function">
    <text evidence="2">Regulatory component of the cyclin D3-CDK4 (DC) complex that phosphorylates and inhibits members of the retinoblastoma (RB) protein family including RB1 and regulates the cell-cycle during G(1)/S transition. Phosphorylation of RB1 allows dissociation of the transcription factor E2F from the RB/E2F complex and the subsequent transcription of E2F target genes which are responsible for the progression through the G(1) phase. Hypophosphorylates RB1 in early G(1) phase. Cyclin D-CDK4 complexes are major integrators of various mitogenenic and antimitogenic signals. Component of the ternary complex, cyclin D3/CDK4/CDKN1B, required for nuclear translocation and activity of the cyclin D-CDK4 complex. Shows transcriptional coactivator activity with ATF5 independently of CDK4.</text>
</comment>
<comment type="subunit">
    <text evidence="2">Interacts with the CDK4 and CDK6 protein kinases to form a serine/threonine kinase holoenzyme complex. The cyclin subunit imparts substrate specificity to the complex. Interacts with ATF5. Interacts with EIF3K. Component of the ternary complex cyclin D/CDK4/CDKN1B required for nuclear translocation and modulation of CDK4-mediated kinase activity. Can form similar complexes with either CDKN1A or CDKN2A.</text>
</comment>
<comment type="subcellular location">
    <subcellularLocation>
        <location evidence="2">Nucleus</location>
    </subcellularLocation>
    <subcellularLocation>
        <location evidence="2">Cytoplasm</location>
    </subcellularLocation>
</comment>
<comment type="PTM">
    <text evidence="1">Phosphorylation at Thr-284 by MAP kinases is required for ubiquitination and degradation by the DCX(AMBRA1) complex.</text>
</comment>
<comment type="PTM">
    <text evidence="2 3">Ubiquitinated by the DCX(AMBRA1) complex during the transition from G1 to S cell phase, leading to its degradation: ubiquitination is dependent on Thr-284 phosphorylation. The DCX(AMBRA1) complex represents the major regulator of CCND3 stability during the G1/S transition (By similarity). Polyubiquitinated by the SCF(FBXL2) complex, leading to proteasomal degradation (By similarity).</text>
</comment>
<comment type="similarity">
    <text evidence="6">Belongs to the cyclin family. Cyclin D subfamily.</text>
</comment>
<gene>
    <name evidence="7" type="primary">Ccnd3</name>
</gene>
<name>CCND3_RAT</name>
<sequence length="293" mass="32434">MELLCCEGTRLAPRAGPDPRLLGDQRVLQSLLRLEERYVPRGSYFQCVQKEIKPHMRKMLAYWMLEVCEEQRCEEDVFPLAMNYLDRYLSCVPTRKAQLQLLGTVCLLLASKLRETTPLTIEKLCIYTDQAMAPWQLREWEVLVLGKLKWDLAAVIAHDFLALILHRLSLPSDRQALVKKHAQTFLALCATDYTFAMYPPSMIATGSIGAAVLGLGACSMSADELTELLAGITGTEVDCLRACQEQQIEAALRESLREAAQTAPSPVPKAPGGSSSQGPSQTSTPTDVTAIHL</sequence>
<dbReference type="EMBL" id="D16309">
    <property type="protein sequence ID" value="BAA03816.1"/>
    <property type="molecule type" value="mRNA"/>
</dbReference>
<dbReference type="EMBL" id="U49935">
    <property type="protein sequence ID" value="AAB40713.1"/>
    <property type="molecule type" value="Genomic_DNA"/>
</dbReference>
<dbReference type="PIR" id="JC4012">
    <property type="entry name" value="JC4012"/>
</dbReference>
<dbReference type="RefSeq" id="NP_036898.1">
    <property type="nucleotide sequence ID" value="NM_012766.1"/>
</dbReference>
<dbReference type="SMR" id="P48961"/>
<dbReference type="BioGRID" id="247241">
    <property type="interactions" value="1"/>
</dbReference>
<dbReference type="ComplexPortal" id="CPX-2078">
    <property type="entry name" value="Cyclin D3-CDK4 complex"/>
</dbReference>
<dbReference type="FunCoup" id="P48961">
    <property type="interactions" value="1133"/>
</dbReference>
<dbReference type="STRING" id="10116.ENSRNOP00000064704"/>
<dbReference type="iPTMnet" id="P48961"/>
<dbReference type="PhosphoSitePlus" id="P48961"/>
<dbReference type="PaxDb" id="10116-ENSRNOP00000064704"/>
<dbReference type="GeneID" id="25193"/>
<dbReference type="KEGG" id="rno:25193"/>
<dbReference type="AGR" id="RGD:2293"/>
<dbReference type="CTD" id="896"/>
<dbReference type="RGD" id="2293">
    <property type="gene designation" value="Ccnd3"/>
</dbReference>
<dbReference type="eggNOG" id="KOG0656">
    <property type="taxonomic scope" value="Eukaryota"/>
</dbReference>
<dbReference type="InParanoid" id="P48961"/>
<dbReference type="OrthoDB" id="306099at2759"/>
<dbReference type="PhylomeDB" id="P48961"/>
<dbReference type="Reactome" id="R-RNO-5687128">
    <property type="pathway name" value="MAPK6/MAPK4 signaling"/>
</dbReference>
<dbReference type="Reactome" id="R-RNO-69231">
    <property type="pathway name" value="Cyclin D associated events in G1"/>
</dbReference>
<dbReference type="Reactome" id="R-RNO-8934593">
    <property type="pathway name" value="Regulation of RUNX1 Expression and Activity"/>
</dbReference>
<dbReference type="Reactome" id="R-RNO-9754119">
    <property type="pathway name" value="Drug-mediated inhibition of CDK4/CDK6 activity"/>
</dbReference>
<dbReference type="PRO" id="PR:P48961"/>
<dbReference type="Proteomes" id="UP000002494">
    <property type="component" value="Unplaced"/>
</dbReference>
<dbReference type="GO" id="GO:0097130">
    <property type="term" value="C:cyclin D3-CDK4 complex"/>
    <property type="evidence" value="ECO:0000266"/>
    <property type="project" value="RGD"/>
</dbReference>
<dbReference type="GO" id="GO:0097133">
    <property type="term" value="C:cyclin D3-CDK6 complex"/>
    <property type="evidence" value="ECO:0000266"/>
    <property type="project" value="RGD"/>
</dbReference>
<dbReference type="GO" id="GO:0000307">
    <property type="term" value="C:cyclin-dependent protein kinase holoenzyme complex"/>
    <property type="evidence" value="ECO:0000266"/>
    <property type="project" value="RGD"/>
</dbReference>
<dbReference type="GO" id="GO:0005737">
    <property type="term" value="C:cytoplasm"/>
    <property type="evidence" value="ECO:0000318"/>
    <property type="project" value="GO_Central"/>
</dbReference>
<dbReference type="GO" id="GO:0005815">
    <property type="term" value="C:microtubule organizing center"/>
    <property type="evidence" value="ECO:0000318"/>
    <property type="project" value="GO_Central"/>
</dbReference>
<dbReference type="GO" id="GO:0005634">
    <property type="term" value="C:nucleus"/>
    <property type="evidence" value="ECO:0000266"/>
    <property type="project" value="RGD"/>
</dbReference>
<dbReference type="GO" id="GO:0061575">
    <property type="term" value="F:cyclin-dependent protein serine/threonine kinase activator activity"/>
    <property type="evidence" value="ECO:0000266"/>
    <property type="project" value="RGD"/>
</dbReference>
<dbReference type="GO" id="GO:0004693">
    <property type="term" value="F:cyclin-dependent protein serine/threonine kinase activity"/>
    <property type="evidence" value="ECO:0000266"/>
    <property type="project" value="RGD"/>
</dbReference>
<dbReference type="GO" id="GO:0016538">
    <property type="term" value="F:cyclin-dependent protein serine/threonine kinase regulator activity"/>
    <property type="evidence" value="ECO:0000318"/>
    <property type="project" value="GO_Central"/>
</dbReference>
<dbReference type="GO" id="GO:0019901">
    <property type="term" value="F:protein kinase binding"/>
    <property type="evidence" value="ECO:0000353"/>
    <property type="project" value="RGD"/>
</dbReference>
<dbReference type="GO" id="GO:0043539">
    <property type="term" value="F:protein serine/threonine kinase activator activity"/>
    <property type="evidence" value="ECO:0000266"/>
    <property type="project" value="RGD"/>
</dbReference>
<dbReference type="GO" id="GO:0051301">
    <property type="term" value="P:cell division"/>
    <property type="evidence" value="ECO:0007669"/>
    <property type="project" value="UniProtKB-KW"/>
</dbReference>
<dbReference type="GO" id="GO:0000082">
    <property type="term" value="P:G1/S transition of mitotic cell cycle"/>
    <property type="evidence" value="ECO:0000270"/>
    <property type="project" value="RGD"/>
</dbReference>
<dbReference type="GO" id="GO:0030213">
    <property type="term" value="P:hyaluronan biosynthetic process"/>
    <property type="evidence" value="ECO:0000315"/>
    <property type="project" value="RGD"/>
</dbReference>
<dbReference type="GO" id="GO:0000122">
    <property type="term" value="P:negative regulation of transcription by RNA polymerase II"/>
    <property type="evidence" value="ECO:0000266"/>
    <property type="project" value="RGD"/>
</dbReference>
<dbReference type="GO" id="GO:0008284">
    <property type="term" value="P:positive regulation of cell population proliferation"/>
    <property type="evidence" value="ECO:0000315"/>
    <property type="project" value="RGD"/>
</dbReference>
<dbReference type="GO" id="GO:1900087">
    <property type="term" value="P:positive regulation of G1/S transition of mitotic cell cycle"/>
    <property type="evidence" value="ECO:0000318"/>
    <property type="project" value="GO_Central"/>
</dbReference>
<dbReference type="GO" id="GO:0051726">
    <property type="term" value="P:regulation of cell cycle"/>
    <property type="evidence" value="ECO:0000266"/>
    <property type="project" value="RGD"/>
</dbReference>
<dbReference type="GO" id="GO:0042127">
    <property type="term" value="P:regulation of cell population proliferation"/>
    <property type="evidence" value="ECO:0000266"/>
    <property type="project" value="RGD"/>
</dbReference>
<dbReference type="GO" id="GO:0009749">
    <property type="term" value="P:response to glucose"/>
    <property type="evidence" value="ECO:0000270"/>
    <property type="project" value="RGD"/>
</dbReference>
<dbReference type="GO" id="GO:0043434">
    <property type="term" value="P:response to peptide hormone"/>
    <property type="evidence" value="ECO:0000315"/>
    <property type="project" value="RGD"/>
</dbReference>
<dbReference type="GO" id="GO:0007165">
    <property type="term" value="P:signal transduction"/>
    <property type="evidence" value="ECO:0000266"/>
    <property type="project" value="RGD"/>
</dbReference>
<dbReference type="GO" id="GO:0042098">
    <property type="term" value="P:T cell proliferation"/>
    <property type="evidence" value="ECO:0000266"/>
    <property type="project" value="RGD"/>
</dbReference>
<dbReference type="FunFam" id="1.10.472.10:FF:000012">
    <property type="entry name" value="G1/S-specific cyclin-D1"/>
    <property type="match status" value="1"/>
</dbReference>
<dbReference type="FunFam" id="1.10.472.10:FF:000096">
    <property type="entry name" value="G1/S-specific cyclin-D3 isoform X2"/>
    <property type="match status" value="1"/>
</dbReference>
<dbReference type="Gene3D" id="1.10.472.10">
    <property type="entry name" value="Cyclin-like"/>
    <property type="match status" value="2"/>
</dbReference>
<dbReference type="InterPro" id="IPR039361">
    <property type="entry name" value="Cyclin"/>
</dbReference>
<dbReference type="InterPro" id="IPR013763">
    <property type="entry name" value="Cyclin-like_dom"/>
</dbReference>
<dbReference type="InterPro" id="IPR036915">
    <property type="entry name" value="Cyclin-like_sf"/>
</dbReference>
<dbReference type="InterPro" id="IPR004367">
    <property type="entry name" value="Cyclin_C-dom"/>
</dbReference>
<dbReference type="InterPro" id="IPR006671">
    <property type="entry name" value="Cyclin_N"/>
</dbReference>
<dbReference type="InterPro" id="IPR048258">
    <property type="entry name" value="Cyclins_cyclin-box"/>
</dbReference>
<dbReference type="PANTHER" id="PTHR10177">
    <property type="entry name" value="CYCLINS"/>
    <property type="match status" value="1"/>
</dbReference>
<dbReference type="Pfam" id="PF02984">
    <property type="entry name" value="Cyclin_C"/>
    <property type="match status" value="1"/>
</dbReference>
<dbReference type="Pfam" id="PF00134">
    <property type="entry name" value="Cyclin_N"/>
    <property type="match status" value="1"/>
</dbReference>
<dbReference type="SMART" id="SM00385">
    <property type="entry name" value="CYCLIN"/>
    <property type="match status" value="1"/>
</dbReference>
<dbReference type="SMART" id="SM01332">
    <property type="entry name" value="Cyclin_C"/>
    <property type="match status" value="1"/>
</dbReference>
<dbReference type="SUPFAM" id="SSF47954">
    <property type="entry name" value="Cyclin-like"/>
    <property type="match status" value="2"/>
</dbReference>
<dbReference type="PROSITE" id="PS00292">
    <property type="entry name" value="CYCLINS"/>
    <property type="match status" value="1"/>
</dbReference>